<organism>
    <name type="scientific">Gracilaria tenuistipitata var. liui</name>
    <name type="common">Red alga</name>
    <dbReference type="NCBI Taxonomy" id="285951"/>
    <lineage>
        <taxon>Eukaryota</taxon>
        <taxon>Rhodophyta</taxon>
        <taxon>Florideophyceae</taxon>
        <taxon>Rhodymeniophycidae</taxon>
        <taxon>Gracilariales</taxon>
        <taxon>Gracilariaceae</taxon>
        <taxon>Gracilaria</taxon>
        <taxon>Gracilaria tenuistipitata</taxon>
    </lineage>
</organism>
<comment type="function">
    <text evidence="1">A core subunit of photosystem II (PSII), probably helps stabilize the reaction center.</text>
</comment>
<comment type="subunit">
    <text evidence="1">PSII is composed of 1 copy each of membrane proteins PsbA, PsbB, PsbC, PsbD, PsbE, PsbF, PsbH, PsbI, PsbJ, PsbK, PsbL, PsbM, PsbT, PsbX, PsbY, PsbZ, Psb30/Ycf12, peripheral proteins of the oxygen-evolving complex and a large number of cofactors. It forms dimeric complexes.</text>
</comment>
<comment type="subcellular location">
    <subcellularLocation>
        <location evidence="1">Plastid</location>
        <location evidence="1">Chloroplast thylakoid membrane</location>
        <topology evidence="1">Single-pass membrane protein</topology>
    </subcellularLocation>
</comment>
<comment type="similarity">
    <text evidence="1">Belongs to the Psb30/Ycf12 family.</text>
</comment>
<keyword id="KW-0150">Chloroplast</keyword>
<keyword id="KW-0472">Membrane</keyword>
<keyword id="KW-0602">Photosynthesis</keyword>
<keyword id="KW-0604">Photosystem II</keyword>
<keyword id="KW-0934">Plastid</keyword>
<keyword id="KW-0793">Thylakoid</keyword>
<keyword id="KW-0812">Transmembrane</keyword>
<keyword id="KW-1133">Transmembrane helix</keyword>
<name>PSB30_GRATL</name>
<geneLocation type="chloroplast"/>
<protein>
    <recommendedName>
        <fullName evidence="1">Photosystem II reaction center protein Psb30</fullName>
    </recommendedName>
    <alternativeName>
        <fullName evidence="1">Photosystem II reaction center protein Ycf12</fullName>
    </alternativeName>
</protein>
<feature type="chain" id="PRO_0000059027" description="Photosystem II reaction center protein Psb30">
    <location>
        <begin position="1"/>
        <end position="34"/>
    </location>
</feature>
<feature type="transmembrane region" description="Helical" evidence="1">
    <location>
        <begin position="6"/>
        <end position="26"/>
    </location>
</feature>
<reference key="1">
    <citation type="journal article" date="2004" name="J. Mol. Evol.">
        <title>Comparative analysis of the complete plastid genome sequence of the red alga Gracilaria tenuistipitata var. liui provides insights into the evolution of rhodoplasts and their relationship to other plastids.</title>
        <authorList>
            <person name="Hagopian J.C."/>
            <person name="Reis M."/>
            <person name="Kitajima J.P."/>
            <person name="Bhattacharya D."/>
            <person name="de Oliveira M.C."/>
        </authorList>
    </citation>
    <scope>NUCLEOTIDE SEQUENCE [LARGE SCALE GENOMIC DNA]</scope>
</reference>
<proteinExistence type="inferred from homology"/>
<sequence length="34" mass="3649">MINWQVIGQLTSLAMIVLVGPAVIVVLSLRKGDL</sequence>
<evidence type="ECO:0000255" key="1">
    <source>
        <dbReference type="HAMAP-Rule" id="MF_01329"/>
    </source>
</evidence>
<dbReference type="EMBL" id="AY673996">
    <property type="protein sequence ID" value="AAT79775.1"/>
    <property type="molecule type" value="Genomic_DNA"/>
</dbReference>
<dbReference type="RefSeq" id="YP_063700.1">
    <property type="nucleotide sequence ID" value="NC_006137.1"/>
</dbReference>
<dbReference type="SMR" id="Q6B8L0"/>
<dbReference type="GeneID" id="2943964"/>
<dbReference type="GO" id="GO:0009535">
    <property type="term" value="C:chloroplast thylakoid membrane"/>
    <property type="evidence" value="ECO:0007669"/>
    <property type="project" value="UniProtKB-SubCell"/>
</dbReference>
<dbReference type="GO" id="GO:0009523">
    <property type="term" value="C:photosystem II"/>
    <property type="evidence" value="ECO:0007669"/>
    <property type="project" value="UniProtKB-KW"/>
</dbReference>
<dbReference type="GO" id="GO:0015979">
    <property type="term" value="P:photosynthesis"/>
    <property type="evidence" value="ECO:0007669"/>
    <property type="project" value="UniProtKB-KW"/>
</dbReference>
<dbReference type="HAMAP" id="MF_01329">
    <property type="entry name" value="PSII_Psb30_Ycf12"/>
    <property type="match status" value="1"/>
</dbReference>
<dbReference type="InterPro" id="IPR010284">
    <property type="entry name" value="PSII_Ycf12_core-subunit"/>
</dbReference>
<dbReference type="NCBIfam" id="NF010239">
    <property type="entry name" value="PRK13686.1"/>
    <property type="match status" value="1"/>
</dbReference>
<dbReference type="Pfam" id="PF05969">
    <property type="entry name" value="PSII_Ycf12"/>
    <property type="match status" value="1"/>
</dbReference>
<accession>Q6B8L0</accession>
<gene>
    <name evidence="1" type="primary">psb30</name>
    <name evidence="1" type="synonym">ycf12</name>
    <name type="ordered locus">Grc000194</name>
</gene>